<organism>
    <name type="scientific">Shewanella woodyi (strain ATCC 51908 / MS32)</name>
    <dbReference type="NCBI Taxonomy" id="392500"/>
    <lineage>
        <taxon>Bacteria</taxon>
        <taxon>Pseudomonadati</taxon>
        <taxon>Pseudomonadota</taxon>
        <taxon>Gammaproteobacteria</taxon>
        <taxon>Alteromonadales</taxon>
        <taxon>Shewanellaceae</taxon>
        <taxon>Shewanella</taxon>
    </lineage>
</organism>
<protein>
    <recommendedName>
        <fullName evidence="1">Na(+)-translocating NADH-quinone reductase subunit D</fullName>
        <shortName evidence="1">Na(+)-NQR subunit D</shortName>
        <shortName evidence="1">Na(+)-translocating NQR subunit D</shortName>
        <ecNumber evidence="1">7.2.1.1</ecNumber>
    </recommendedName>
    <alternativeName>
        <fullName evidence="1">NQR complex subunit D</fullName>
    </alternativeName>
    <alternativeName>
        <fullName evidence="1">NQR-1 subunit D</fullName>
    </alternativeName>
</protein>
<accession>B1KD43</accession>
<proteinExistence type="inferred from homology"/>
<dbReference type="EC" id="7.2.1.1" evidence="1"/>
<dbReference type="EMBL" id="CP000961">
    <property type="protein sequence ID" value="ACA87878.1"/>
    <property type="molecule type" value="Genomic_DNA"/>
</dbReference>
<dbReference type="RefSeq" id="WP_012326211.1">
    <property type="nucleotide sequence ID" value="NC_010506.1"/>
</dbReference>
<dbReference type="SMR" id="B1KD43"/>
<dbReference type="STRING" id="392500.Swoo_3614"/>
<dbReference type="KEGG" id="swd:Swoo_3614"/>
<dbReference type="eggNOG" id="COG1347">
    <property type="taxonomic scope" value="Bacteria"/>
</dbReference>
<dbReference type="HOGENOM" id="CLU_046659_1_1_6"/>
<dbReference type="Proteomes" id="UP000002168">
    <property type="component" value="Chromosome"/>
</dbReference>
<dbReference type="GO" id="GO:0005886">
    <property type="term" value="C:plasma membrane"/>
    <property type="evidence" value="ECO:0007669"/>
    <property type="project" value="UniProtKB-SubCell"/>
</dbReference>
<dbReference type="GO" id="GO:0016655">
    <property type="term" value="F:oxidoreductase activity, acting on NAD(P)H, quinone or similar compound as acceptor"/>
    <property type="evidence" value="ECO:0007669"/>
    <property type="project" value="UniProtKB-UniRule"/>
</dbReference>
<dbReference type="GO" id="GO:0006814">
    <property type="term" value="P:sodium ion transport"/>
    <property type="evidence" value="ECO:0007669"/>
    <property type="project" value="UniProtKB-UniRule"/>
</dbReference>
<dbReference type="HAMAP" id="MF_00428">
    <property type="entry name" value="NqrD"/>
    <property type="match status" value="1"/>
</dbReference>
<dbReference type="InterPro" id="IPR011292">
    <property type="entry name" value="NqrD"/>
</dbReference>
<dbReference type="InterPro" id="IPR003667">
    <property type="entry name" value="NqrDE/RnfAE"/>
</dbReference>
<dbReference type="NCBIfam" id="TIGR01939">
    <property type="entry name" value="nqrD"/>
    <property type="match status" value="1"/>
</dbReference>
<dbReference type="NCBIfam" id="NF006777">
    <property type="entry name" value="PRK09292.1"/>
    <property type="match status" value="1"/>
</dbReference>
<dbReference type="NCBIfam" id="NF009070">
    <property type="entry name" value="PRK12405.1"/>
    <property type="match status" value="1"/>
</dbReference>
<dbReference type="PANTHER" id="PTHR30586">
    <property type="entry name" value="ELECTRON TRANSPORT COMPLEX PROTEIN RNFE"/>
    <property type="match status" value="1"/>
</dbReference>
<dbReference type="PANTHER" id="PTHR30586:SF1">
    <property type="entry name" value="NA(+)-TRANSLOCATING NADH-QUINONE REDUCTASE SUBUNIT D"/>
    <property type="match status" value="1"/>
</dbReference>
<dbReference type="Pfam" id="PF02508">
    <property type="entry name" value="Rnf-Nqr"/>
    <property type="match status" value="1"/>
</dbReference>
<dbReference type="PIRSF" id="PIRSF006102">
    <property type="entry name" value="NQR_DE"/>
    <property type="match status" value="1"/>
</dbReference>
<sequence>MANAKELKQVLSGPIVSNNPIALQVLGVCSALAVTSKMETALVMTIALTAVCACSNLFISMLRNHIPSSVRIIVQMTIIASLVIVVDQVLQAYAYDVAKQLSVFVGLIITNCIVMGRAEAYAMKTPPMMSFMDGIGNGLGYGAILLSVGFVRELFGNGSLFGVEILSKISDGGWYQPNGLLLLPPSAFFLIGTLIWIIRTVKPEQVEAKG</sequence>
<reference key="1">
    <citation type="submission" date="2008-02" db="EMBL/GenBank/DDBJ databases">
        <title>Complete sequence of Shewanella woodyi ATCC 51908.</title>
        <authorList>
            <consortium name="US DOE Joint Genome Institute"/>
            <person name="Copeland A."/>
            <person name="Lucas S."/>
            <person name="Lapidus A."/>
            <person name="Glavina del Rio T."/>
            <person name="Dalin E."/>
            <person name="Tice H."/>
            <person name="Bruce D."/>
            <person name="Goodwin L."/>
            <person name="Pitluck S."/>
            <person name="Sims D."/>
            <person name="Brettin T."/>
            <person name="Detter J.C."/>
            <person name="Han C."/>
            <person name="Kuske C.R."/>
            <person name="Schmutz J."/>
            <person name="Larimer F."/>
            <person name="Land M."/>
            <person name="Hauser L."/>
            <person name="Kyrpides N."/>
            <person name="Lykidis A."/>
            <person name="Zhao J.-S."/>
            <person name="Richardson P."/>
        </authorList>
    </citation>
    <scope>NUCLEOTIDE SEQUENCE [LARGE SCALE GENOMIC DNA]</scope>
    <source>
        <strain>ATCC 51908 / MS32</strain>
    </source>
</reference>
<keyword id="KW-0997">Cell inner membrane</keyword>
<keyword id="KW-1003">Cell membrane</keyword>
<keyword id="KW-0406">Ion transport</keyword>
<keyword id="KW-0472">Membrane</keyword>
<keyword id="KW-0520">NAD</keyword>
<keyword id="KW-1185">Reference proteome</keyword>
<keyword id="KW-0915">Sodium</keyword>
<keyword id="KW-0739">Sodium transport</keyword>
<keyword id="KW-1278">Translocase</keyword>
<keyword id="KW-0812">Transmembrane</keyword>
<keyword id="KW-1133">Transmembrane helix</keyword>
<keyword id="KW-0813">Transport</keyword>
<keyword id="KW-0830">Ubiquinone</keyword>
<name>NQRD_SHEWM</name>
<evidence type="ECO:0000255" key="1">
    <source>
        <dbReference type="HAMAP-Rule" id="MF_00428"/>
    </source>
</evidence>
<feature type="chain" id="PRO_1000191690" description="Na(+)-translocating NADH-quinone reductase subunit D">
    <location>
        <begin position="1"/>
        <end position="210"/>
    </location>
</feature>
<feature type="transmembrane region" description="Helical" evidence="1">
    <location>
        <begin position="14"/>
        <end position="34"/>
    </location>
</feature>
<feature type="transmembrane region" description="Helical" evidence="1">
    <location>
        <begin position="42"/>
        <end position="62"/>
    </location>
</feature>
<feature type="transmembrane region" description="Helical" evidence="1">
    <location>
        <begin position="72"/>
        <end position="92"/>
    </location>
</feature>
<feature type="transmembrane region" description="Helical" evidence="1">
    <location>
        <begin position="103"/>
        <end position="123"/>
    </location>
</feature>
<feature type="transmembrane region" description="Helical" evidence="1">
    <location>
        <begin position="131"/>
        <end position="151"/>
    </location>
</feature>
<feature type="transmembrane region" description="Helical" evidence="1">
    <location>
        <begin position="178"/>
        <end position="198"/>
    </location>
</feature>
<comment type="function">
    <text evidence="1">NQR complex catalyzes the reduction of ubiquinone-1 to ubiquinol by two successive reactions, coupled with the transport of Na(+) ions from the cytoplasm to the periplasm. NqrA to NqrE are probably involved in the second step, the conversion of ubisemiquinone to ubiquinol.</text>
</comment>
<comment type="catalytic activity">
    <reaction evidence="1">
        <text>a ubiquinone + n Na(+)(in) + NADH + H(+) = a ubiquinol + n Na(+)(out) + NAD(+)</text>
        <dbReference type="Rhea" id="RHEA:47748"/>
        <dbReference type="Rhea" id="RHEA-COMP:9565"/>
        <dbReference type="Rhea" id="RHEA-COMP:9566"/>
        <dbReference type="ChEBI" id="CHEBI:15378"/>
        <dbReference type="ChEBI" id="CHEBI:16389"/>
        <dbReference type="ChEBI" id="CHEBI:17976"/>
        <dbReference type="ChEBI" id="CHEBI:29101"/>
        <dbReference type="ChEBI" id="CHEBI:57540"/>
        <dbReference type="ChEBI" id="CHEBI:57945"/>
        <dbReference type="EC" id="7.2.1.1"/>
    </reaction>
</comment>
<comment type="subunit">
    <text evidence="1">Composed of six subunits; NqrA, NqrB, NqrC, NqrD, NqrE and NqrF.</text>
</comment>
<comment type="subcellular location">
    <subcellularLocation>
        <location evidence="1">Cell inner membrane</location>
        <topology evidence="1">Multi-pass membrane protein</topology>
    </subcellularLocation>
</comment>
<comment type="similarity">
    <text evidence="1">Belongs to the NqrDE/RnfAE family.</text>
</comment>
<gene>
    <name evidence="1" type="primary">nqrD</name>
    <name type="ordered locus">Swoo_3614</name>
</gene>